<feature type="chain" id="PRO_1000132609" description="Adenosylcobinamide-GDP ribazoletransferase">
    <location>
        <begin position="1"/>
        <end position="233"/>
    </location>
</feature>
<feature type="transmembrane region" description="Helical" evidence="1">
    <location>
        <begin position="24"/>
        <end position="44"/>
    </location>
</feature>
<feature type="transmembrane region" description="Helical" evidence="1">
    <location>
        <begin position="46"/>
        <end position="66"/>
    </location>
</feature>
<feature type="transmembrane region" description="Helical" evidence="1">
    <location>
        <begin position="96"/>
        <end position="116"/>
    </location>
</feature>
<feature type="transmembrane region" description="Helical" evidence="1">
    <location>
        <begin position="117"/>
        <end position="137"/>
    </location>
</feature>
<feature type="transmembrane region" description="Helical" evidence="1">
    <location>
        <begin position="156"/>
        <end position="176"/>
    </location>
</feature>
<feature type="transmembrane region" description="Helical" evidence="1">
    <location>
        <begin position="184"/>
        <end position="204"/>
    </location>
</feature>
<feature type="transmembrane region" description="Helical" evidence="1">
    <location>
        <begin position="209"/>
        <end position="229"/>
    </location>
</feature>
<evidence type="ECO:0000255" key="1">
    <source>
        <dbReference type="HAMAP-Rule" id="MF_00719"/>
    </source>
</evidence>
<gene>
    <name evidence="1" type="primary">cobS</name>
    <name type="ordered locus">TON_0684</name>
</gene>
<proteinExistence type="inferred from homology"/>
<organism>
    <name type="scientific">Thermococcus onnurineus (strain NA1)</name>
    <dbReference type="NCBI Taxonomy" id="523850"/>
    <lineage>
        <taxon>Archaea</taxon>
        <taxon>Methanobacteriati</taxon>
        <taxon>Methanobacteriota</taxon>
        <taxon>Thermococci</taxon>
        <taxon>Thermococcales</taxon>
        <taxon>Thermococcaceae</taxon>
        <taxon>Thermococcus</taxon>
    </lineage>
</organism>
<name>COBS_THEON</name>
<reference key="1">
    <citation type="journal article" date="2008" name="J. Bacteriol.">
        <title>The complete genome sequence of Thermococcus onnurineus NA1 reveals a mixed heterotrophic and carboxydotrophic metabolism.</title>
        <authorList>
            <person name="Lee H.S."/>
            <person name="Kang S.G."/>
            <person name="Bae S.S."/>
            <person name="Lim J.K."/>
            <person name="Cho Y."/>
            <person name="Kim Y.J."/>
            <person name="Jeon J.H."/>
            <person name="Cha S.-S."/>
            <person name="Kwon K.K."/>
            <person name="Kim H.-T."/>
            <person name="Park C.-J."/>
            <person name="Lee H.-W."/>
            <person name="Kim S.I."/>
            <person name="Chun J."/>
            <person name="Colwell R.R."/>
            <person name="Kim S.-J."/>
            <person name="Lee J.-H."/>
        </authorList>
    </citation>
    <scope>NUCLEOTIDE SEQUENCE [LARGE SCALE GENOMIC DNA]</scope>
    <source>
        <strain>NA1</strain>
    </source>
</reference>
<protein>
    <recommendedName>
        <fullName evidence="1">Adenosylcobinamide-GDP ribazoletransferase</fullName>
        <ecNumber evidence="1">2.7.8.26</ecNumber>
    </recommendedName>
    <alternativeName>
        <fullName evidence="1">Cobalamin synthase</fullName>
    </alternativeName>
    <alternativeName>
        <fullName evidence="1">Cobalamin-5'-phosphate synthase</fullName>
    </alternativeName>
</protein>
<dbReference type="EC" id="2.7.8.26" evidence="1"/>
<dbReference type="EMBL" id="CP000855">
    <property type="protein sequence ID" value="ACJ16172.1"/>
    <property type="molecule type" value="Genomic_DNA"/>
</dbReference>
<dbReference type="RefSeq" id="WP_012571644.1">
    <property type="nucleotide sequence ID" value="NC_011529.1"/>
</dbReference>
<dbReference type="STRING" id="523850.TON_0684"/>
<dbReference type="GeneID" id="7016985"/>
<dbReference type="KEGG" id="ton:TON_0684"/>
<dbReference type="PATRIC" id="fig|523850.10.peg.687"/>
<dbReference type="eggNOG" id="arCOG04338">
    <property type="taxonomic scope" value="Archaea"/>
</dbReference>
<dbReference type="HOGENOM" id="CLU_057426_2_0_2"/>
<dbReference type="OrthoDB" id="11748at2157"/>
<dbReference type="UniPathway" id="UPA00148">
    <property type="reaction ID" value="UER00238"/>
</dbReference>
<dbReference type="Proteomes" id="UP000002727">
    <property type="component" value="Chromosome"/>
</dbReference>
<dbReference type="GO" id="GO:0005886">
    <property type="term" value="C:plasma membrane"/>
    <property type="evidence" value="ECO:0007669"/>
    <property type="project" value="UniProtKB-SubCell"/>
</dbReference>
<dbReference type="GO" id="GO:0051073">
    <property type="term" value="F:adenosylcobinamide-GDP ribazoletransferase activity"/>
    <property type="evidence" value="ECO:0007669"/>
    <property type="project" value="UniProtKB-UniRule"/>
</dbReference>
<dbReference type="GO" id="GO:0008818">
    <property type="term" value="F:cobalamin 5'-phosphate synthase activity"/>
    <property type="evidence" value="ECO:0007669"/>
    <property type="project" value="UniProtKB-UniRule"/>
</dbReference>
<dbReference type="GO" id="GO:0009236">
    <property type="term" value="P:cobalamin biosynthetic process"/>
    <property type="evidence" value="ECO:0007669"/>
    <property type="project" value="UniProtKB-UniRule"/>
</dbReference>
<dbReference type="HAMAP" id="MF_00719">
    <property type="entry name" value="CobS"/>
    <property type="match status" value="1"/>
</dbReference>
<dbReference type="InterPro" id="IPR003805">
    <property type="entry name" value="CobS"/>
</dbReference>
<dbReference type="NCBIfam" id="TIGR00317">
    <property type="entry name" value="cobS"/>
    <property type="match status" value="1"/>
</dbReference>
<dbReference type="PANTHER" id="PTHR34148">
    <property type="entry name" value="ADENOSYLCOBINAMIDE-GDP RIBAZOLETRANSFERASE"/>
    <property type="match status" value="1"/>
</dbReference>
<dbReference type="PANTHER" id="PTHR34148:SF1">
    <property type="entry name" value="ADENOSYLCOBINAMIDE-GDP RIBAZOLETRANSFERASE"/>
    <property type="match status" value="1"/>
</dbReference>
<dbReference type="Pfam" id="PF02654">
    <property type="entry name" value="CobS"/>
    <property type="match status" value="1"/>
</dbReference>
<sequence>MKNLLPFLTRVPIKGDFEKVREELWAFPLVALVSSALPTLVLYLKLPLSNVLAVLALYFTIGLLHLDGLADFADGVMVKGNRERKIKAMKDLNTGIAGLFAVVMVLFLQVYSLQLVPFYAIFLAELNSKLAMLLALATRKPLGQGLGAYFMERMNSGQLLGGFIFYAILLVPVVVYEQNALVSLLGLAFGGYAIKVALDNFGGINGDCIGAIAEITRAGTLLVVAFAGAYLGG</sequence>
<keyword id="KW-1003">Cell membrane</keyword>
<keyword id="KW-0169">Cobalamin biosynthesis</keyword>
<keyword id="KW-0460">Magnesium</keyword>
<keyword id="KW-0472">Membrane</keyword>
<keyword id="KW-0808">Transferase</keyword>
<keyword id="KW-0812">Transmembrane</keyword>
<keyword id="KW-1133">Transmembrane helix</keyword>
<comment type="function">
    <text evidence="1">Joins adenosylcobinamide-GDP and alpha-ribazole to generate adenosylcobalamin (Ado-cobalamin). Also synthesizes adenosylcobalamin 5'-phosphate from adenosylcobinamide-GDP and alpha-ribazole 5'-phosphate.</text>
</comment>
<comment type="catalytic activity">
    <reaction evidence="1">
        <text>alpha-ribazole + adenosylcob(III)inamide-GDP = adenosylcob(III)alamin + GMP + H(+)</text>
        <dbReference type="Rhea" id="RHEA:16049"/>
        <dbReference type="ChEBI" id="CHEBI:10329"/>
        <dbReference type="ChEBI" id="CHEBI:15378"/>
        <dbReference type="ChEBI" id="CHEBI:18408"/>
        <dbReference type="ChEBI" id="CHEBI:58115"/>
        <dbReference type="ChEBI" id="CHEBI:60487"/>
        <dbReference type="EC" id="2.7.8.26"/>
    </reaction>
</comment>
<comment type="catalytic activity">
    <reaction evidence="1">
        <text>alpha-ribazole 5'-phosphate + adenosylcob(III)inamide-GDP = adenosylcob(III)alamin 5'-phosphate + GMP + H(+)</text>
        <dbReference type="Rhea" id="RHEA:23560"/>
        <dbReference type="ChEBI" id="CHEBI:15378"/>
        <dbReference type="ChEBI" id="CHEBI:57918"/>
        <dbReference type="ChEBI" id="CHEBI:58115"/>
        <dbReference type="ChEBI" id="CHEBI:60487"/>
        <dbReference type="ChEBI" id="CHEBI:60493"/>
        <dbReference type="EC" id="2.7.8.26"/>
    </reaction>
</comment>
<comment type="cofactor">
    <cofactor evidence="1">
        <name>Mg(2+)</name>
        <dbReference type="ChEBI" id="CHEBI:18420"/>
    </cofactor>
</comment>
<comment type="pathway">
    <text evidence="1">Cofactor biosynthesis; adenosylcobalamin biosynthesis; adenosylcobalamin from cob(II)yrinate a,c-diamide: step 7/7.</text>
</comment>
<comment type="subcellular location">
    <subcellularLocation>
        <location evidence="1">Cell membrane</location>
        <topology evidence="1">Multi-pass membrane protein</topology>
    </subcellularLocation>
</comment>
<comment type="similarity">
    <text evidence="1">Belongs to the CobS family.</text>
</comment>
<accession>B6YV94</accession>